<gene>
    <name evidence="1" type="primary">rplD</name>
    <name type="ordered locus">lin2780</name>
</gene>
<organism>
    <name type="scientific">Listeria innocua serovar 6a (strain ATCC BAA-680 / CLIP 11262)</name>
    <dbReference type="NCBI Taxonomy" id="272626"/>
    <lineage>
        <taxon>Bacteria</taxon>
        <taxon>Bacillati</taxon>
        <taxon>Bacillota</taxon>
        <taxon>Bacilli</taxon>
        <taxon>Bacillales</taxon>
        <taxon>Listeriaceae</taxon>
        <taxon>Listeria</taxon>
    </lineage>
</organism>
<protein>
    <recommendedName>
        <fullName evidence="1">Large ribosomal subunit protein uL4</fullName>
    </recommendedName>
    <alternativeName>
        <fullName evidence="3">50S ribosomal protein L4</fullName>
    </alternativeName>
</protein>
<proteinExistence type="inferred from homology"/>
<comment type="function">
    <text evidence="1">One of the primary rRNA binding proteins, this protein initially binds near the 5'-end of the 23S rRNA. It is important during the early stages of 50S assembly. It makes multiple contacts with different domains of the 23S rRNA in the assembled 50S subunit and ribosome.</text>
</comment>
<comment type="function">
    <text evidence="1">Forms part of the polypeptide exit tunnel.</text>
</comment>
<comment type="subunit">
    <text evidence="1">Part of the 50S ribosomal subunit.</text>
</comment>
<comment type="similarity">
    <text evidence="1">Belongs to the universal ribosomal protein uL4 family.</text>
</comment>
<name>RL4_LISIN</name>
<evidence type="ECO:0000255" key="1">
    <source>
        <dbReference type="HAMAP-Rule" id="MF_01328"/>
    </source>
</evidence>
<evidence type="ECO:0000256" key="2">
    <source>
        <dbReference type="SAM" id="MobiDB-lite"/>
    </source>
</evidence>
<evidence type="ECO:0000305" key="3"/>
<dbReference type="EMBL" id="AL596173">
    <property type="protein sequence ID" value="CAC98006.1"/>
    <property type="molecule type" value="Genomic_DNA"/>
</dbReference>
<dbReference type="PIR" id="AF1779">
    <property type="entry name" value="AF1779"/>
</dbReference>
<dbReference type="RefSeq" id="WP_003727695.1">
    <property type="nucleotide sequence ID" value="NC_003212.1"/>
</dbReference>
<dbReference type="SMR" id="P61054"/>
<dbReference type="STRING" id="272626.gene:17567167"/>
<dbReference type="GeneID" id="93240512"/>
<dbReference type="KEGG" id="lin:rplD"/>
<dbReference type="eggNOG" id="COG0088">
    <property type="taxonomic scope" value="Bacteria"/>
</dbReference>
<dbReference type="HOGENOM" id="CLU_041575_5_2_9"/>
<dbReference type="OrthoDB" id="9803201at2"/>
<dbReference type="Proteomes" id="UP000002513">
    <property type="component" value="Chromosome"/>
</dbReference>
<dbReference type="GO" id="GO:1990904">
    <property type="term" value="C:ribonucleoprotein complex"/>
    <property type="evidence" value="ECO:0007669"/>
    <property type="project" value="UniProtKB-KW"/>
</dbReference>
<dbReference type="GO" id="GO:0005840">
    <property type="term" value="C:ribosome"/>
    <property type="evidence" value="ECO:0007669"/>
    <property type="project" value="UniProtKB-KW"/>
</dbReference>
<dbReference type="GO" id="GO:0019843">
    <property type="term" value="F:rRNA binding"/>
    <property type="evidence" value="ECO:0007669"/>
    <property type="project" value="UniProtKB-UniRule"/>
</dbReference>
<dbReference type="GO" id="GO:0003735">
    <property type="term" value="F:structural constituent of ribosome"/>
    <property type="evidence" value="ECO:0007669"/>
    <property type="project" value="InterPro"/>
</dbReference>
<dbReference type="GO" id="GO:0006412">
    <property type="term" value="P:translation"/>
    <property type="evidence" value="ECO:0007669"/>
    <property type="project" value="UniProtKB-UniRule"/>
</dbReference>
<dbReference type="FunFam" id="3.40.1370.10:FF:000003">
    <property type="entry name" value="50S ribosomal protein L4"/>
    <property type="match status" value="1"/>
</dbReference>
<dbReference type="Gene3D" id="3.40.1370.10">
    <property type="match status" value="1"/>
</dbReference>
<dbReference type="HAMAP" id="MF_01328_B">
    <property type="entry name" value="Ribosomal_uL4_B"/>
    <property type="match status" value="1"/>
</dbReference>
<dbReference type="InterPro" id="IPR002136">
    <property type="entry name" value="Ribosomal_uL4"/>
</dbReference>
<dbReference type="InterPro" id="IPR013005">
    <property type="entry name" value="Ribosomal_uL4-like"/>
</dbReference>
<dbReference type="InterPro" id="IPR023574">
    <property type="entry name" value="Ribosomal_uL4_dom_sf"/>
</dbReference>
<dbReference type="NCBIfam" id="TIGR03953">
    <property type="entry name" value="rplD_bact"/>
    <property type="match status" value="1"/>
</dbReference>
<dbReference type="PANTHER" id="PTHR10746">
    <property type="entry name" value="50S RIBOSOMAL PROTEIN L4"/>
    <property type="match status" value="1"/>
</dbReference>
<dbReference type="PANTHER" id="PTHR10746:SF6">
    <property type="entry name" value="LARGE RIBOSOMAL SUBUNIT PROTEIN UL4M"/>
    <property type="match status" value="1"/>
</dbReference>
<dbReference type="Pfam" id="PF00573">
    <property type="entry name" value="Ribosomal_L4"/>
    <property type="match status" value="1"/>
</dbReference>
<dbReference type="SUPFAM" id="SSF52166">
    <property type="entry name" value="Ribosomal protein L4"/>
    <property type="match status" value="1"/>
</dbReference>
<feature type="chain" id="PRO_0000129232" description="Large ribosomal subunit protein uL4">
    <location>
        <begin position="1"/>
        <end position="207"/>
    </location>
</feature>
<feature type="region of interest" description="Disordered" evidence="2">
    <location>
        <begin position="47"/>
        <end position="78"/>
    </location>
</feature>
<feature type="compositionally biased region" description="Basic residues" evidence="2">
    <location>
        <begin position="60"/>
        <end position="71"/>
    </location>
</feature>
<sequence length="207" mass="22603">MPKLSLLKQDGTNAGEITLNDTVFGIEPNEKVVVDVILSQRASLRQGTHKVKNRSEVRGGGRKPWRQKGTGRARQGSIRSPQWRGGGVVFGPTPRSYAYKLPKKVRRLAIKSILSSKVNEEKLVVLEGLTFDAPKTKEFAAFLKNISVDTKALIVVAGESENVELSARNLQGITVIPAESISVLEVAKHDKLIITKAAVEKVEEVLA</sequence>
<reference key="1">
    <citation type="journal article" date="2001" name="Science">
        <title>Comparative genomics of Listeria species.</title>
        <authorList>
            <person name="Glaser P."/>
            <person name="Frangeul L."/>
            <person name="Buchrieser C."/>
            <person name="Rusniok C."/>
            <person name="Amend A."/>
            <person name="Baquero F."/>
            <person name="Berche P."/>
            <person name="Bloecker H."/>
            <person name="Brandt P."/>
            <person name="Chakraborty T."/>
            <person name="Charbit A."/>
            <person name="Chetouani F."/>
            <person name="Couve E."/>
            <person name="de Daruvar A."/>
            <person name="Dehoux P."/>
            <person name="Domann E."/>
            <person name="Dominguez-Bernal G."/>
            <person name="Duchaud E."/>
            <person name="Durant L."/>
            <person name="Dussurget O."/>
            <person name="Entian K.-D."/>
            <person name="Fsihi H."/>
            <person name="Garcia-del Portillo F."/>
            <person name="Garrido P."/>
            <person name="Gautier L."/>
            <person name="Goebel W."/>
            <person name="Gomez-Lopez N."/>
            <person name="Hain T."/>
            <person name="Hauf J."/>
            <person name="Jackson D."/>
            <person name="Jones L.-M."/>
            <person name="Kaerst U."/>
            <person name="Kreft J."/>
            <person name="Kuhn M."/>
            <person name="Kunst F."/>
            <person name="Kurapkat G."/>
            <person name="Madueno E."/>
            <person name="Maitournam A."/>
            <person name="Mata Vicente J."/>
            <person name="Ng E."/>
            <person name="Nedjari H."/>
            <person name="Nordsiek G."/>
            <person name="Novella S."/>
            <person name="de Pablos B."/>
            <person name="Perez-Diaz J.-C."/>
            <person name="Purcell R."/>
            <person name="Remmel B."/>
            <person name="Rose M."/>
            <person name="Schlueter T."/>
            <person name="Simoes N."/>
            <person name="Tierrez A."/>
            <person name="Vazquez-Boland J.-A."/>
            <person name="Voss H."/>
            <person name="Wehland J."/>
            <person name="Cossart P."/>
        </authorList>
    </citation>
    <scope>NUCLEOTIDE SEQUENCE [LARGE SCALE GENOMIC DNA]</scope>
    <source>
        <strain>ATCC BAA-680 / CLIP 11262</strain>
    </source>
</reference>
<keyword id="KW-0687">Ribonucleoprotein</keyword>
<keyword id="KW-0689">Ribosomal protein</keyword>
<keyword id="KW-0694">RNA-binding</keyword>
<keyword id="KW-0699">rRNA-binding</keyword>
<accession>P61054</accession>
<accession>Q927K8</accession>